<gene>
    <name evidence="1" type="primary">nuoB</name>
    <name type="ordered locus">EcE24377A_2580</name>
</gene>
<name>NUOB_ECO24</name>
<protein>
    <recommendedName>
        <fullName evidence="1">NADH-quinone oxidoreductase subunit B</fullName>
        <ecNumber evidence="1">7.1.1.-</ecNumber>
    </recommendedName>
    <alternativeName>
        <fullName evidence="1">NADH dehydrogenase I subunit B</fullName>
    </alternativeName>
    <alternativeName>
        <fullName evidence="1">NDH-1 subunit B</fullName>
    </alternativeName>
</protein>
<keyword id="KW-0004">4Fe-4S</keyword>
<keyword id="KW-0997">Cell inner membrane</keyword>
<keyword id="KW-1003">Cell membrane</keyword>
<keyword id="KW-0408">Iron</keyword>
<keyword id="KW-0411">Iron-sulfur</keyword>
<keyword id="KW-0472">Membrane</keyword>
<keyword id="KW-0479">Metal-binding</keyword>
<keyword id="KW-0520">NAD</keyword>
<keyword id="KW-0874">Quinone</keyword>
<keyword id="KW-1185">Reference proteome</keyword>
<keyword id="KW-1278">Translocase</keyword>
<keyword id="KW-0813">Transport</keyword>
<keyword id="KW-0830">Ubiquinone</keyword>
<feature type="chain" id="PRO_0000376213" description="NADH-quinone oxidoreductase subunit B">
    <location>
        <begin position="1"/>
        <end position="220"/>
    </location>
</feature>
<feature type="binding site" evidence="1">
    <location>
        <position position="63"/>
    </location>
    <ligand>
        <name>[4Fe-4S] cluster</name>
        <dbReference type="ChEBI" id="CHEBI:49883"/>
    </ligand>
</feature>
<feature type="binding site" evidence="1">
    <location>
        <position position="64"/>
    </location>
    <ligand>
        <name>[4Fe-4S] cluster</name>
        <dbReference type="ChEBI" id="CHEBI:49883"/>
    </ligand>
</feature>
<feature type="binding site" evidence="1">
    <location>
        <position position="129"/>
    </location>
    <ligand>
        <name>[4Fe-4S] cluster</name>
        <dbReference type="ChEBI" id="CHEBI:49883"/>
    </ligand>
</feature>
<feature type="binding site" evidence="1">
    <location>
        <position position="158"/>
    </location>
    <ligand>
        <name>[4Fe-4S] cluster</name>
        <dbReference type="ChEBI" id="CHEBI:49883"/>
    </ligand>
</feature>
<comment type="function">
    <text evidence="1">NDH-1 shuttles electrons from NADH, via FMN and iron-sulfur (Fe-S) centers, to quinones in the respiratory chain. The immediate electron acceptor for the enzyme in this species is believed to be ubiquinone. Couples the redox reaction to proton translocation (for every two electrons transferred, four hydrogen ions are translocated across the cytoplasmic membrane), and thus conserves the redox energy in a proton gradient.</text>
</comment>
<comment type="catalytic activity">
    <reaction evidence="1">
        <text>a quinone + NADH + 5 H(+)(in) = a quinol + NAD(+) + 4 H(+)(out)</text>
        <dbReference type="Rhea" id="RHEA:57888"/>
        <dbReference type="ChEBI" id="CHEBI:15378"/>
        <dbReference type="ChEBI" id="CHEBI:24646"/>
        <dbReference type="ChEBI" id="CHEBI:57540"/>
        <dbReference type="ChEBI" id="CHEBI:57945"/>
        <dbReference type="ChEBI" id="CHEBI:132124"/>
    </reaction>
</comment>
<comment type="cofactor">
    <cofactor evidence="1">
        <name>[4Fe-4S] cluster</name>
        <dbReference type="ChEBI" id="CHEBI:49883"/>
    </cofactor>
    <text evidence="1">Binds 1 [4Fe-4S] cluster.</text>
</comment>
<comment type="subunit">
    <text evidence="1">NDH-1 is composed of 13 different subunits. Subunits NuoB, CD, E, F, and G constitute the peripheral sector of the complex.</text>
</comment>
<comment type="subcellular location">
    <subcellularLocation>
        <location evidence="1">Cell inner membrane</location>
        <topology evidence="1">Peripheral membrane protein</topology>
        <orientation evidence="1">Cytoplasmic side</orientation>
    </subcellularLocation>
</comment>
<comment type="similarity">
    <text evidence="1">Belongs to the complex I 20 kDa subunit family.</text>
</comment>
<dbReference type="EC" id="7.1.1.-" evidence="1"/>
<dbReference type="EMBL" id="CP000800">
    <property type="protein sequence ID" value="ABV17471.1"/>
    <property type="molecule type" value="Genomic_DNA"/>
</dbReference>
<dbReference type="RefSeq" id="WP_000386733.1">
    <property type="nucleotide sequence ID" value="NC_009801.1"/>
</dbReference>
<dbReference type="SMR" id="A7ZPA1"/>
<dbReference type="GeneID" id="93774887"/>
<dbReference type="KEGG" id="ecw:EcE24377A_2580"/>
<dbReference type="HOGENOM" id="CLU_055737_7_3_6"/>
<dbReference type="Proteomes" id="UP000001122">
    <property type="component" value="Chromosome"/>
</dbReference>
<dbReference type="GO" id="GO:0005886">
    <property type="term" value="C:plasma membrane"/>
    <property type="evidence" value="ECO:0007669"/>
    <property type="project" value="UniProtKB-SubCell"/>
</dbReference>
<dbReference type="GO" id="GO:0045271">
    <property type="term" value="C:respiratory chain complex I"/>
    <property type="evidence" value="ECO:0007669"/>
    <property type="project" value="TreeGrafter"/>
</dbReference>
<dbReference type="GO" id="GO:0051539">
    <property type="term" value="F:4 iron, 4 sulfur cluster binding"/>
    <property type="evidence" value="ECO:0007669"/>
    <property type="project" value="UniProtKB-KW"/>
</dbReference>
<dbReference type="GO" id="GO:0005506">
    <property type="term" value="F:iron ion binding"/>
    <property type="evidence" value="ECO:0007669"/>
    <property type="project" value="UniProtKB-UniRule"/>
</dbReference>
<dbReference type="GO" id="GO:0008137">
    <property type="term" value="F:NADH dehydrogenase (ubiquinone) activity"/>
    <property type="evidence" value="ECO:0007669"/>
    <property type="project" value="InterPro"/>
</dbReference>
<dbReference type="GO" id="GO:0050136">
    <property type="term" value="F:NADH:ubiquinone reductase (non-electrogenic) activity"/>
    <property type="evidence" value="ECO:0007669"/>
    <property type="project" value="UniProtKB-UniRule"/>
</dbReference>
<dbReference type="GO" id="GO:0048038">
    <property type="term" value="F:quinone binding"/>
    <property type="evidence" value="ECO:0007669"/>
    <property type="project" value="UniProtKB-KW"/>
</dbReference>
<dbReference type="GO" id="GO:0009060">
    <property type="term" value="P:aerobic respiration"/>
    <property type="evidence" value="ECO:0007669"/>
    <property type="project" value="TreeGrafter"/>
</dbReference>
<dbReference type="GO" id="GO:0015990">
    <property type="term" value="P:electron transport coupled proton transport"/>
    <property type="evidence" value="ECO:0007669"/>
    <property type="project" value="TreeGrafter"/>
</dbReference>
<dbReference type="FunFam" id="3.40.50.12280:FF:000002">
    <property type="entry name" value="NADH-quinone oxidoreductase subunit B"/>
    <property type="match status" value="1"/>
</dbReference>
<dbReference type="Gene3D" id="3.40.50.12280">
    <property type="match status" value="1"/>
</dbReference>
<dbReference type="HAMAP" id="MF_01356">
    <property type="entry name" value="NDH1_NuoB"/>
    <property type="match status" value="1"/>
</dbReference>
<dbReference type="InterPro" id="IPR006137">
    <property type="entry name" value="NADH_UbQ_OxRdtase-like_20kDa"/>
</dbReference>
<dbReference type="InterPro" id="IPR006138">
    <property type="entry name" value="NADH_UQ_OxRdtase_20Kd_su"/>
</dbReference>
<dbReference type="NCBIfam" id="TIGR01957">
    <property type="entry name" value="nuoB_fam"/>
    <property type="match status" value="1"/>
</dbReference>
<dbReference type="NCBIfam" id="NF005012">
    <property type="entry name" value="PRK06411.1"/>
    <property type="match status" value="1"/>
</dbReference>
<dbReference type="PANTHER" id="PTHR11995">
    <property type="entry name" value="NADH DEHYDROGENASE"/>
    <property type="match status" value="1"/>
</dbReference>
<dbReference type="PANTHER" id="PTHR11995:SF14">
    <property type="entry name" value="NADH DEHYDROGENASE [UBIQUINONE] IRON-SULFUR PROTEIN 7, MITOCHONDRIAL"/>
    <property type="match status" value="1"/>
</dbReference>
<dbReference type="Pfam" id="PF01058">
    <property type="entry name" value="Oxidored_q6"/>
    <property type="match status" value="1"/>
</dbReference>
<dbReference type="SUPFAM" id="SSF56770">
    <property type="entry name" value="HydA/Nqo6-like"/>
    <property type="match status" value="1"/>
</dbReference>
<dbReference type="PROSITE" id="PS01150">
    <property type="entry name" value="COMPLEX1_20K"/>
    <property type="match status" value="1"/>
</dbReference>
<sequence>MDYTLTRIDPNGENDRYPLQKQEIVTDPLEQEVNKNVFMGKLNDMVNWGRKNSIWPYNFGLSCCYVEMVTSFTAVHDVARFGAEVLRASPRQADLMVVAGTCFTKMAPVIQRLYDQMLEPKWVISMGACANSGGMYDIYSVVQGVDKFIPVDVYIPGCPPRPEAYMQALMLLQESIGKERRPLSWVVGDQGVYRANMQSERERKRGERIAVTNLRTPDEI</sequence>
<proteinExistence type="inferred from homology"/>
<reference key="1">
    <citation type="journal article" date="2008" name="J. Bacteriol.">
        <title>The pangenome structure of Escherichia coli: comparative genomic analysis of E. coli commensal and pathogenic isolates.</title>
        <authorList>
            <person name="Rasko D.A."/>
            <person name="Rosovitz M.J."/>
            <person name="Myers G.S.A."/>
            <person name="Mongodin E.F."/>
            <person name="Fricke W.F."/>
            <person name="Gajer P."/>
            <person name="Crabtree J."/>
            <person name="Sebaihia M."/>
            <person name="Thomson N.R."/>
            <person name="Chaudhuri R."/>
            <person name="Henderson I.R."/>
            <person name="Sperandio V."/>
            <person name="Ravel J."/>
        </authorList>
    </citation>
    <scope>NUCLEOTIDE SEQUENCE [LARGE SCALE GENOMIC DNA]</scope>
    <source>
        <strain>E24377A / ETEC</strain>
    </source>
</reference>
<evidence type="ECO:0000255" key="1">
    <source>
        <dbReference type="HAMAP-Rule" id="MF_01356"/>
    </source>
</evidence>
<organism>
    <name type="scientific">Escherichia coli O139:H28 (strain E24377A / ETEC)</name>
    <dbReference type="NCBI Taxonomy" id="331111"/>
    <lineage>
        <taxon>Bacteria</taxon>
        <taxon>Pseudomonadati</taxon>
        <taxon>Pseudomonadota</taxon>
        <taxon>Gammaproteobacteria</taxon>
        <taxon>Enterobacterales</taxon>
        <taxon>Enterobacteriaceae</taxon>
        <taxon>Escherichia</taxon>
    </lineage>
</organism>
<accession>A7ZPA1</accession>